<keyword id="KW-0067">ATP-binding</keyword>
<keyword id="KW-0347">Helicase</keyword>
<keyword id="KW-0378">Hydrolase</keyword>
<keyword id="KW-0547">Nucleotide-binding</keyword>
<keyword id="KW-0539">Nucleus</keyword>
<keyword id="KW-1185">Reference proteome</keyword>
<keyword id="KW-0690">Ribosome biogenesis</keyword>
<keyword id="KW-0694">RNA-binding</keyword>
<keyword id="KW-0698">rRNA processing</keyword>
<comment type="function">
    <text evidence="1">ATP-binding RNA helicase involved in 40S ribosomal subunit biogenesis and is required for the normal formation of 18S rRNAs through pre-rRNA processing at A0, A1 and A2 sites. Required for vegetative growth (By similarity).</text>
</comment>
<comment type="catalytic activity">
    <reaction>
        <text>ATP + H2O = ADP + phosphate + H(+)</text>
        <dbReference type="Rhea" id="RHEA:13065"/>
        <dbReference type="ChEBI" id="CHEBI:15377"/>
        <dbReference type="ChEBI" id="CHEBI:15378"/>
        <dbReference type="ChEBI" id="CHEBI:30616"/>
        <dbReference type="ChEBI" id="CHEBI:43474"/>
        <dbReference type="ChEBI" id="CHEBI:456216"/>
        <dbReference type="EC" id="3.6.4.13"/>
    </reaction>
</comment>
<comment type="subcellular location">
    <subcellularLocation>
        <location evidence="1">Nucleus</location>
        <location evidence="1">Nucleolus</location>
    </subcellularLocation>
</comment>
<comment type="domain">
    <text>The Q motif is unique to and characteristic of the DEAD box family of RNA helicases and controls ATP binding and hydrolysis.</text>
</comment>
<comment type="similarity">
    <text evidence="5">Belongs to the DEAD box helicase family. DDX49/DBP8 subfamily.</text>
</comment>
<evidence type="ECO:0000250" key="1"/>
<evidence type="ECO:0000255" key="2">
    <source>
        <dbReference type="PROSITE-ProRule" id="PRU00541"/>
    </source>
</evidence>
<evidence type="ECO:0000255" key="3">
    <source>
        <dbReference type="PROSITE-ProRule" id="PRU00542"/>
    </source>
</evidence>
<evidence type="ECO:0000256" key="4">
    <source>
        <dbReference type="SAM" id="MobiDB-lite"/>
    </source>
</evidence>
<evidence type="ECO:0000305" key="5"/>
<name>DBP8_VANPO</name>
<sequence length="431" mass="47794">MQDFKSLGLSRWLVESLNAMRITHPTAIQKHCIPEILKGRDCIGGAKTGSGKTIAFAGPMLSQWSDDPSGMFGVVLTPTRELAIQIAEQFTALGSSMNIRVCLVVGGESIVKQALELQKKPHFIIATPGRLAHHILSSGEEVVGGLSRVKYLVLDEADLILTQTFAADLSTCIAKLPPKQKRQTLLFTATITDQVRALQNAPAQDSKPPLFAYEVENVDNVAVPSTLKLEYLLVPEHVKEAYLYQLLTCEDYKDSSVIVFVNRTTAAEVLRRTLRSLEVRVASLHSQMPQSERINSLQRFRANAARVLIATDVAARGLDIPTVELVINYDIPQDPDTFIHRSGRTARAGRSGDAISFVTPRDVSRIEAIEERINKKMDECKKVHDTAVIRKALTKVTKAKRESLMDMEKANFGEKRKTQKKKNLAEKSLRA</sequence>
<feature type="chain" id="PRO_0000310237" description="ATP-dependent RNA helicase DBP8">
    <location>
        <begin position="1"/>
        <end position="431"/>
    </location>
</feature>
<feature type="domain" description="Helicase ATP-binding" evidence="2">
    <location>
        <begin position="33"/>
        <end position="209"/>
    </location>
</feature>
<feature type="domain" description="Helicase C-terminal" evidence="3">
    <location>
        <begin position="242"/>
        <end position="389"/>
    </location>
</feature>
<feature type="region of interest" description="Disordered" evidence="4">
    <location>
        <begin position="406"/>
        <end position="431"/>
    </location>
</feature>
<feature type="short sequence motif" description="Q motif">
    <location>
        <begin position="2"/>
        <end position="30"/>
    </location>
</feature>
<feature type="short sequence motif" description="DEAD box">
    <location>
        <begin position="155"/>
        <end position="158"/>
    </location>
</feature>
<feature type="compositionally biased region" description="Basic and acidic residues" evidence="4">
    <location>
        <begin position="406"/>
        <end position="416"/>
    </location>
</feature>
<feature type="binding site" evidence="2">
    <location>
        <begin position="46"/>
        <end position="53"/>
    </location>
    <ligand>
        <name>ATP</name>
        <dbReference type="ChEBI" id="CHEBI:30616"/>
    </ligand>
</feature>
<organism>
    <name type="scientific">Vanderwaltozyma polyspora (strain ATCC 22028 / DSM 70294 / BCRC 21397 / CBS 2163 / NBRC 10782 / NRRL Y-8283 / UCD 57-17)</name>
    <name type="common">Kluyveromyces polysporus</name>
    <dbReference type="NCBI Taxonomy" id="436907"/>
    <lineage>
        <taxon>Eukaryota</taxon>
        <taxon>Fungi</taxon>
        <taxon>Dikarya</taxon>
        <taxon>Ascomycota</taxon>
        <taxon>Saccharomycotina</taxon>
        <taxon>Saccharomycetes</taxon>
        <taxon>Saccharomycetales</taxon>
        <taxon>Saccharomycetaceae</taxon>
        <taxon>Vanderwaltozyma</taxon>
    </lineage>
</organism>
<dbReference type="EC" id="3.6.4.13"/>
<dbReference type="EMBL" id="DS480406">
    <property type="protein sequence ID" value="EDO17298.1"/>
    <property type="molecule type" value="Genomic_DNA"/>
</dbReference>
<dbReference type="RefSeq" id="XP_001645156.1">
    <property type="nucleotide sequence ID" value="XM_001645106.1"/>
</dbReference>
<dbReference type="SMR" id="A7TK63"/>
<dbReference type="FunCoup" id="A7TK63">
    <property type="interactions" value="929"/>
</dbReference>
<dbReference type="STRING" id="436907.A7TK63"/>
<dbReference type="GeneID" id="5545504"/>
<dbReference type="KEGG" id="vpo:Kpol_1062p5"/>
<dbReference type="eggNOG" id="KOG0340">
    <property type="taxonomic scope" value="Eukaryota"/>
</dbReference>
<dbReference type="HOGENOM" id="CLU_003041_1_1_1"/>
<dbReference type="InParanoid" id="A7TK63"/>
<dbReference type="OMA" id="IMIFTDT"/>
<dbReference type="OrthoDB" id="10261904at2759"/>
<dbReference type="PhylomeDB" id="A7TK63"/>
<dbReference type="Proteomes" id="UP000000267">
    <property type="component" value="Unassembled WGS sequence"/>
</dbReference>
<dbReference type="GO" id="GO:0005829">
    <property type="term" value="C:cytosol"/>
    <property type="evidence" value="ECO:0007669"/>
    <property type="project" value="TreeGrafter"/>
</dbReference>
<dbReference type="GO" id="GO:0005730">
    <property type="term" value="C:nucleolus"/>
    <property type="evidence" value="ECO:0007669"/>
    <property type="project" value="UniProtKB-SubCell"/>
</dbReference>
<dbReference type="GO" id="GO:0032040">
    <property type="term" value="C:small-subunit processome"/>
    <property type="evidence" value="ECO:0007669"/>
    <property type="project" value="EnsemblFungi"/>
</dbReference>
<dbReference type="GO" id="GO:0005524">
    <property type="term" value="F:ATP binding"/>
    <property type="evidence" value="ECO:0007669"/>
    <property type="project" value="UniProtKB-KW"/>
</dbReference>
<dbReference type="GO" id="GO:0016887">
    <property type="term" value="F:ATP hydrolysis activity"/>
    <property type="evidence" value="ECO:0007669"/>
    <property type="project" value="EnsemblFungi"/>
</dbReference>
<dbReference type="GO" id="GO:0003723">
    <property type="term" value="F:RNA binding"/>
    <property type="evidence" value="ECO:0007669"/>
    <property type="project" value="UniProtKB-KW"/>
</dbReference>
<dbReference type="GO" id="GO:0003724">
    <property type="term" value="F:RNA helicase activity"/>
    <property type="evidence" value="ECO:0007669"/>
    <property type="project" value="UniProtKB-EC"/>
</dbReference>
<dbReference type="GO" id="GO:0000480">
    <property type="term" value="P:endonucleolytic cleavage in 5'-ETS of tricistronic rRNA transcript (SSU-rRNA, 5.8S rRNA, LSU-rRNA)"/>
    <property type="evidence" value="ECO:0007669"/>
    <property type="project" value="EnsemblFungi"/>
</dbReference>
<dbReference type="GO" id="GO:0000447">
    <property type="term" value="P:endonucleolytic cleavage in ITS1 to separate SSU-rRNA from 5.8S rRNA and LSU-rRNA from tricistronic rRNA transcript (SSU-rRNA, 5.8S rRNA, LSU-rRNA)"/>
    <property type="evidence" value="ECO:0007669"/>
    <property type="project" value="EnsemblFungi"/>
</dbReference>
<dbReference type="GO" id="GO:0000472">
    <property type="term" value="P:endonucleolytic cleavage to generate mature 5'-end of SSU-rRNA from (SSU-rRNA, 5.8S rRNA, LSU-rRNA)"/>
    <property type="evidence" value="ECO:0007669"/>
    <property type="project" value="EnsemblFungi"/>
</dbReference>
<dbReference type="CDD" id="cd17955">
    <property type="entry name" value="DEADc_DDX49"/>
    <property type="match status" value="1"/>
</dbReference>
<dbReference type="CDD" id="cd18787">
    <property type="entry name" value="SF2_C_DEAD"/>
    <property type="match status" value="1"/>
</dbReference>
<dbReference type="FunFam" id="3.40.50.300:FF:000993">
    <property type="entry name" value="probable ATP-dependent RNA helicase DDX49"/>
    <property type="match status" value="1"/>
</dbReference>
<dbReference type="Gene3D" id="3.40.50.300">
    <property type="entry name" value="P-loop containing nucleotide triphosphate hydrolases"/>
    <property type="match status" value="2"/>
</dbReference>
<dbReference type="InterPro" id="IPR011545">
    <property type="entry name" value="DEAD/DEAH_box_helicase_dom"/>
</dbReference>
<dbReference type="InterPro" id="IPR050079">
    <property type="entry name" value="DEAD_box_RNA_helicase"/>
</dbReference>
<dbReference type="InterPro" id="IPR014001">
    <property type="entry name" value="Helicase_ATP-bd"/>
</dbReference>
<dbReference type="InterPro" id="IPR001650">
    <property type="entry name" value="Helicase_C-like"/>
</dbReference>
<dbReference type="InterPro" id="IPR027417">
    <property type="entry name" value="P-loop_NTPase"/>
</dbReference>
<dbReference type="InterPro" id="IPR014014">
    <property type="entry name" value="RNA_helicase_DEAD_Q_motif"/>
</dbReference>
<dbReference type="PANTHER" id="PTHR47959:SF24">
    <property type="entry name" value="ATP-DEPENDENT RNA HELICASE"/>
    <property type="match status" value="1"/>
</dbReference>
<dbReference type="PANTHER" id="PTHR47959">
    <property type="entry name" value="ATP-DEPENDENT RNA HELICASE RHLE-RELATED"/>
    <property type="match status" value="1"/>
</dbReference>
<dbReference type="Pfam" id="PF00270">
    <property type="entry name" value="DEAD"/>
    <property type="match status" value="1"/>
</dbReference>
<dbReference type="Pfam" id="PF00271">
    <property type="entry name" value="Helicase_C"/>
    <property type="match status" value="1"/>
</dbReference>
<dbReference type="SMART" id="SM00487">
    <property type="entry name" value="DEXDc"/>
    <property type="match status" value="1"/>
</dbReference>
<dbReference type="SMART" id="SM00490">
    <property type="entry name" value="HELICc"/>
    <property type="match status" value="1"/>
</dbReference>
<dbReference type="SUPFAM" id="SSF52540">
    <property type="entry name" value="P-loop containing nucleoside triphosphate hydrolases"/>
    <property type="match status" value="1"/>
</dbReference>
<dbReference type="PROSITE" id="PS51192">
    <property type="entry name" value="HELICASE_ATP_BIND_1"/>
    <property type="match status" value="1"/>
</dbReference>
<dbReference type="PROSITE" id="PS51194">
    <property type="entry name" value="HELICASE_CTER"/>
    <property type="match status" value="1"/>
</dbReference>
<dbReference type="PROSITE" id="PS51195">
    <property type="entry name" value="Q_MOTIF"/>
    <property type="match status" value="1"/>
</dbReference>
<protein>
    <recommendedName>
        <fullName>ATP-dependent RNA helicase DBP8</fullName>
        <ecNumber>3.6.4.13</ecNumber>
    </recommendedName>
</protein>
<proteinExistence type="inferred from homology"/>
<accession>A7TK63</accession>
<reference key="1">
    <citation type="journal article" date="2007" name="Proc. Natl. Acad. Sci. U.S.A.">
        <title>Independent sorting-out of thousands of duplicated gene pairs in two yeast species descended from a whole-genome duplication.</title>
        <authorList>
            <person name="Scannell D.R."/>
            <person name="Frank A.C."/>
            <person name="Conant G.C."/>
            <person name="Byrne K.P."/>
            <person name="Woolfit M."/>
            <person name="Wolfe K.H."/>
        </authorList>
    </citation>
    <scope>NUCLEOTIDE SEQUENCE [LARGE SCALE GENOMIC DNA]</scope>
    <source>
        <strain>ATCC 22028 / DSM 70294 / BCRC 21397 / CBS 2163 / NBRC 10782 / NRRL Y-8283 / UCD 57-17</strain>
    </source>
</reference>
<gene>
    <name type="primary">DBP8</name>
    <name type="ORF">Kpol_1062p5</name>
</gene>